<gene>
    <name evidence="1" type="primary">atpE</name>
</gene>
<geneLocation type="chloroplast"/>
<name>ATPE_OLTVI</name>
<protein>
    <recommendedName>
        <fullName evidence="1">ATP synthase epsilon chain, chloroplastic</fullName>
    </recommendedName>
    <alternativeName>
        <fullName evidence="1">ATP synthase F1 sector epsilon subunit</fullName>
    </alternativeName>
    <alternativeName>
        <fullName evidence="1">F-ATPase epsilon subunit</fullName>
    </alternativeName>
</protein>
<organism>
    <name type="scientific">Oltmannsiellopsis viridis</name>
    <name type="common">Marine flagellate</name>
    <name type="synonym">Oltmannsiella viridis</name>
    <dbReference type="NCBI Taxonomy" id="51324"/>
    <lineage>
        <taxon>Eukaryota</taxon>
        <taxon>Viridiplantae</taxon>
        <taxon>Chlorophyta</taxon>
        <taxon>Ulvophyceae</taxon>
        <taxon>Oltmannsiellopsidales</taxon>
        <taxon>Oltmannsiellopsidaceae</taxon>
        <taxon>Oltmannsiellopsis</taxon>
    </lineage>
</organism>
<accession>Q20EW9</accession>
<dbReference type="EMBL" id="DQ291132">
    <property type="protein sequence ID" value="ABB81944.1"/>
    <property type="molecule type" value="Genomic_DNA"/>
</dbReference>
<dbReference type="RefSeq" id="YP_635876.1">
    <property type="nucleotide sequence ID" value="NC_008099.1"/>
</dbReference>
<dbReference type="SMR" id="Q20EW9"/>
<dbReference type="GeneID" id="4100136"/>
<dbReference type="GO" id="GO:0009535">
    <property type="term" value="C:chloroplast thylakoid membrane"/>
    <property type="evidence" value="ECO:0007669"/>
    <property type="project" value="UniProtKB-SubCell"/>
</dbReference>
<dbReference type="GO" id="GO:0045259">
    <property type="term" value="C:proton-transporting ATP synthase complex"/>
    <property type="evidence" value="ECO:0007669"/>
    <property type="project" value="UniProtKB-KW"/>
</dbReference>
<dbReference type="GO" id="GO:0005524">
    <property type="term" value="F:ATP binding"/>
    <property type="evidence" value="ECO:0007669"/>
    <property type="project" value="UniProtKB-UniRule"/>
</dbReference>
<dbReference type="GO" id="GO:0046933">
    <property type="term" value="F:proton-transporting ATP synthase activity, rotational mechanism"/>
    <property type="evidence" value="ECO:0007669"/>
    <property type="project" value="UniProtKB-UniRule"/>
</dbReference>
<dbReference type="CDD" id="cd12152">
    <property type="entry name" value="F1-ATPase_delta"/>
    <property type="match status" value="1"/>
</dbReference>
<dbReference type="Gene3D" id="6.10.140.480">
    <property type="match status" value="1"/>
</dbReference>
<dbReference type="Gene3D" id="2.60.15.10">
    <property type="entry name" value="F0F1 ATP synthase delta/epsilon subunit, N-terminal"/>
    <property type="match status" value="1"/>
</dbReference>
<dbReference type="HAMAP" id="MF_00530">
    <property type="entry name" value="ATP_synth_epsil_bac"/>
    <property type="match status" value="1"/>
</dbReference>
<dbReference type="InterPro" id="IPR001469">
    <property type="entry name" value="ATP_synth_F1_dsu/esu"/>
</dbReference>
<dbReference type="InterPro" id="IPR020546">
    <property type="entry name" value="ATP_synth_F1_dsu/esu_N"/>
</dbReference>
<dbReference type="InterPro" id="IPR020547">
    <property type="entry name" value="ATP_synth_F1_esu_C"/>
</dbReference>
<dbReference type="InterPro" id="IPR036771">
    <property type="entry name" value="ATPsynth_dsu/esu_N"/>
</dbReference>
<dbReference type="NCBIfam" id="TIGR01216">
    <property type="entry name" value="ATP_synt_epsi"/>
    <property type="match status" value="1"/>
</dbReference>
<dbReference type="PANTHER" id="PTHR13822">
    <property type="entry name" value="ATP SYNTHASE DELTA/EPSILON CHAIN"/>
    <property type="match status" value="1"/>
</dbReference>
<dbReference type="PANTHER" id="PTHR13822:SF10">
    <property type="entry name" value="ATP SYNTHASE EPSILON CHAIN, CHLOROPLASTIC"/>
    <property type="match status" value="1"/>
</dbReference>
<dbReference type="Pfam" id="PF00401">
    <property type="entry name" value="ATP-synt_DE"/>
    <property type="match status" value="1"/>
</dbReference>
<dbReference type="Pfam" id="PF02823">
    <property type="entry name" value="ATP-synt_DE_N"/>
    <property type="match status" value="1"/>
</dbReference>
<dbReference type="SUPFAM" id="SSF51344">
    <property type="entry name" value="Epsilon subunit of F1F0-ATP synthase N-terminal domain"/>
    <property type="match status" value="1"/>
</dbReference>
<keyword id="KW-0066">ATP synthesis</keyword>
<keyword id="KW-0139">CF(1)</keyword>
<keyword id="KW-0150">Chloroplast</keyword>
<keyword id="KW-0375">Hydrogen ion transport</keyword>
<keyword id="KW-0406">Ion transport</keyword>
<keyword id="KW-0472">Membrane</keyword>
<keyword id="KW-0934">Plastid</keyword>
<keyword id="KW-0793">Thylakoid</keyword>
<keyword id="KW-0813">Transport</keyword>
<reference key="1">
    <citation type="journal article" date="2006" name="BMC Biol.">
        <title>The complete chloroplast DNA sequence of the green alga Oltmannsiellopsis viridis reveals a distinctive quadripartite architecture in the chloroplast genome of early diverging ulvophytes.</title>
        <authorList>
            <person name="Pombert J.-F."/>
            <person name="Lemieux C."/>
            <person name="Turmel M."/>
        </authorList>
    </citation>
    <scope>NUCLEOTIDE SEQUENCE [LARGE SCALE GENOMIC DNA]</scope>
</reference>
<sequence length="131" mass="14397">MSLQICVMTPDCIFLNKEVDEIILPTNTGQMGVLSNHAPLITALDIGVMLVRTQKDWESVAVMGGFALVKQNQITVLVNEAESKETIDPQEAEEAFATAKQTLEQATGQKEKVEANFAFKRARARYQVIGA</sequence>
<comment type="function">
    <text evidence="1">Produces ATP from ADP in the presence of a proton gradient across the membrane.</text>
</comment>
<comment type="subunit">
    <text evidence="1">F-type ATPases have 2 components, CF(1) - the catalytic core - and CF(0) - the membrane proton channel. CF(1) has five subunits: alpha(3), beta(3), gamma(1), delta(1), epsilon(1). CF(0) has three main subunits: a, b and c.</text>
</comment>
<comment type="subcellular location">
    <subcellularLocation>
        <location evidence="1">Plastid</location>
        <location evidence="1">Chloroplast thylakoid membrane</location>
        <topology evidence="1">Peripheral membrane protein</topology>
    </subcellularLocation>
</comment>
<comment type="similarity">
    <text evidence="1">Belongs to the ATPase epsilon chain family.</text>
</comment>
<proteinExistence type="inferred from homology"/>
<evidence type="ECO:0000255" key="1">
    <source>
        <dbReference type="HAMAP-Rule" id="MF_00530"/>
    </source>
</evidence>
<feature type="chain" id="PRO_0000275209" description="ATP synthase epsilon chain, chloroplastic">
    <location>
        <begin position="1"/>
        <end position="131"/>
    </location>
</feature>